<evidence type="ECO:0000255" key="1">
    <source>
        <dbReference type="PROSITE-ProRule" id="PRU00165"/>
    </source>
</evidence>
<evidence type="ECO:0000255" key="2">
    <source>
        <dbReference type="PROSITE-ProRule" id="PRU00795"/>
    </source>
</evidence>
<evidence type="ECO:0000256" key="3">
    <source>
        <dbReference type="SAM" id="MobiDB-lite"/>
    </source>
</evidence>
<evidence type="ECO:0000303" key="4">
    <source>
    </source>
</evidence>
<evidence type="ECO:0000303" key="5">
    <source>
    </source>
</evidence>
<evidence type="ECO:0000305" key="6"/>
<evidence type="ECO:0007744" key="7">
    <source>
    </source>
</evidence>
<feature type="chain" id="PRO_0000312216" description="GTPase-activating Rap/Ran-GAP domain-like protein 3">
    <location>
        <begin position="1"/>
        <end position="1038"/>
    </location>
</feature>
<feature type="domain" description="Rap-GAP" evidence="1">
    <location>
        <begin position="214"/>
        <end position="430"/>
    </location>
</feature>
<feature type="domain" description="CNH" evidence="2">
    <location>
        <begin position="512"/>
        <end position="824"/>
    </location>
</feature>
<feature type="region of interest" description="Disordered" evidence="3">
    <location>
        <begin position="833"/>
        <end position="863"/>
    </location>
</feature>
<feature type="region of interest" description="Disordered" evidence="3">
    <location>
        <begin position="937"/>
        <end position="1038"/>
    </location>
</feature>
<feature type="compositionally biased region" description="Polar residues" evidence="3">
    <location>
        <begin position="1019"/>
        <end position="1028"/>
    </location>
</feature>
<feature type="modified residue" description="Phosphoserine" evidence="7">
    <location>
        <position position="68"/>
    </location>
</feature>
<feature type="modified residue" description="Phosphoserine" evidence="7">
    <location>
        <position position="449"/>
    </location>
</feature>
<feature type="modified residue" description="Phosphoserine" evidence="7">
    <location>
        <position position="455"/>
    </location>
</feature>
<feature type="modified residue" description="Phosphothreonine" evidence="7">
    <location>
        <position position="851"/>
    </location>
</feature>
<feature type="splice variant" id="VSP_029746" description="In isoform 2." evidence="4 5">
    <location>
        <begin position="1"/>
        <end position="45"/>
    </location>
</feature>
<feature type="splice variant" id="VSP_029747" description="In isoform 2." evidence="4 5">
    <original>VNL</original>
    <variation>MKS</variation>
    <location>
        <begin position="46"/>
        <end position="48"/>
    </location>
</feature>
<feature type="sequence conflict" description="In Ref. 1; BAC38990." evidence="6" ref="1">
    <original>T</original>
    <variation>A</variation>
    <location>
        <position position="529"/>
    </location>
</feature>
<feature type="modified residue" description="Phosphoserine" evidence="7">
    <location sequence="Q3V0G7-2">
        <position position="6"/>
    </location>
</feature>
<proteinExistence type="evidence at protein level"/>
<gene>
    <name type="primary">Garnl3</name>
</gene>
<protein>
    <recommendedName>
        <fullName>GTPase-activating Rap/Ran-GAP domain-like protein 3</fullName>
    </recommendedName>
</protein>
<keyword id="KW-0025">Alternative splicing</keyword>
<keyword id="KW-0903">Direct protein sequencing</keyword>
<keyword id="KW-0343">GTPase activation</keyword>
<keyword id="KW-0597">Phosphoprotein</keyword>
<keyword id="KW-1185">Reference proteome</keyword>
<dbReference type="EMBL" id="AK034068">
    <property type="protein sequence ID" value="BAC28570.1"/>
    <property type="molecule type" value="mRNA"/>
</dbReference>
<dbReference type="EMBL" id="AK083673">
    <property type="protein sequence ID" value="BAC38990.1"/>
    <property type="status" value="ALT_INIT"/>
    <property type="molecule type" value="mRNA"/>
</dbReference>
<dbReference type="EMBL" id="AK133163">
    <property type="protein sequence ID" value="BAE21537.1"/>
    <property type="molecule type" value="mRNA"/>
</dbReference>
<dbReference type="EMBL" id="AL731852">
    <property type="status" value="NOT_ANNOTATED_CDS"/>
    <property type="molecule type" value="Genomic_DNA"/>
</dbReference>
<dbReference type="EMBL" id="BC132143">
    <property type="protein sequence ID" value="AAI32144.1"/>
    <property type="molecule type" value="mRNA"/>
</dbReference>
<dbReference type="CCDS" id="CCDS15938.1">
    <molecule id="Q3V0G7-2"/>
</dbReference>
<dbReference type="CCDS" id="CCDS89476.1">
    <molecule id="Q3V0G7-1"/>
</dbReference>
<dbReference type="RefSeq" id="NP_001342130.1">
    <molecule id="Q3V0G7-1"/>
    <property type="nucleotide sequence ID" value="NM_001355201.1"/>
</dbReference>
<dbReference type="RefSeq" id="NP_849219.2">
    <molecule id="Q3V0G7-2"/>
    <property type="nucleotide sequence ID" value="NM_178888.4"/>
</dbReference>
<dbReference type="RefSeq" id="XP_006498546.1">
    <molecule id="Q3V0G7-1"/>
    <property type="nucleotide sequence ID" value="XM_006498483.5"/>
</dbReference>
<dbReference type="RefSeq" id="XP_006498547.1">
    <property type="nucleotide sequence ID" value="XM_006498484.3"/>
</dbReference>
<dbReference type="RefSeq" id="XP_006498548.1">
    <molecule id="Q3V0G7-1"/>
    <property type="nucleotide sequence ID" value="XM_006498485.5"/>
</dbReference>
<dbReference type="RefSeq" id="XP_030108133.1">
    <molecule id="Q3V0G7-1"/>
    <property type="nucleotide sequence ID" value="XM_030252273.2"/>
</dbReference>
<dbReference type="SMR" id="Q3V0G7"/>
<dbReference type="BioGRID" id="221228">
    <property type="interactions" value="8"/>
</dbReference>
<dbReference type="FunCoup" id="Q3V0G7">
    <property type="interactions" value="1042"/>
</dbReference>
<dbReference type="STRING" id="10090.ENSMUSP00000099874"/>
<dbReference type="GlyGen" id="Q3V0G7">
    <property type="glycosylation" value="3 sites, 1 O-linked glycan (2 sites)"/>
</dbReference>
<dbReference type="iPTMnet" id="Q3V0G7"/>
<dbReference type="PhosphoSitePlus" id="Q3V0G7"/>
<dbReference type="SwissPalm" id="Q3V0G7"/>
<dbReference type="PaxDb" id="10090-ENSMUSP00000099874"/>
<dbReference type="ProteomicsDB" id="267558">
    <molecule id="Q3V0G7-1"/>
</dbReference>
<dbReference type="ProteomicsDB" id="267559">
    <molecule id="Q3V0G7-2"/>
</dbReference>
<dbReference type="Pumba" id="Q3V0G7"/>
<dbReference type="Antibodypedia" id="16601">
    <property type="antibodies" value="47 antibodies from 11 providers"/>
</dbReference>
<dbReference type="DNASU" id="99326"/>
<dbReference type="Ensembl" id="ENSMUST00000102810.10">
    <molecule id="Q3V0G7-2"/>
    <property type="protein sequence ID" value="ENSMUSP00000099874.4"/>
    <property type="gene ID" value="ENSMUSG00000038860.16"/>
</dbReference>
<dbReference type="Ensembl" id="ENSMUST00000137381.8">
    <molecule id="Q3V0G7-1"/>
    <property type="protein sequence ID" value="ENSMUSP00000122576.3"/>
    <property type="gene ID" value="ENSMUSG00000038860.16"/>
</dbReference>
<dbReference type="GeneID" id="99326"/>
<dbReference type="KEGG" id="mmu:99326"/>
<dbReference type="UCSC" id="uc008jhi.1">
    <molecule id="Q3V0G7-2"/>
    <property type="organism name" value="mouse"/>
</dbReference>
<dbReference type="UCSC" id="uc008jhj.1">
    <molecule id="Q3V0G7-1"/>
    <property type="organism name" value="mouse"/>
</dbReference>
<dbReference type="AGR" id="MGI:2139309"/>
<dbReference type="CTD" id="84253"/>
<dbReference type="MGI" id="MGI:2139309">
    <property type="gene designation" value="Garnl3"/>
</dbReference>
<dbReference type="VEuPathDB" id="HostDB:ENSMUSG00000038860"/>
<dbReference type="eggNOG" id="KOG3686">
    <property type="taxonomic scope" value="Eukaryota"/>
</dbReference>
<dbReference type="GeneTree" id="ENSGT00940000159362"/>
<dbReference type="HOGENOM" id="CLU_008685_1_0_1"/>
<dbReference type="InParanoid" id="Q3V0G7"/>
<dbReference type="OMA" id="FEGYSER"/>
<dbReference type="OrthoDB" id="2499658at2759"/>
<dbReference type="PhylomeDB" id="Q3V0G7"/>
<dbReference type="TreeFam" id="TF318626"/>
<dbReference type="BioGRID-ORCS" id="99326">
    <property type="hits" value="2 hits in 77 CRISPR screens"/>
</dbReference>
<dbReference type="ChiTaRS" id="Garnl3">
    <property type="organism name" value="mouse"/>
</dbReference>
<dbReference type="PRO" id="PR:Q3V0G7"/>
<dbReference type="Proteomes" id="UP000000589">
    <property type="component" value="Chromosome 2"/>
</dbReference>
<dbReference type="RNAct" id="Q3V0G7">
    <property type="molecule type" value="protein"/>
</dbReference>
<dbReference type="Bgee" id="ENSMUSG00000038860">
    <property type="expression patterns" value="Expressed in cerebellar cortex and 165 other cell types or tissues"/>
</dbReference>
<dbReference type="ExpressionAtlas" id="Q3V0G7">
    <property type="expression patterns" value="baseline and differential"/>
</dbReference>
<dbReference type="GO" id="GO:0005096">
    <property type="term" value="F:GTPase activator activity"/>
    <property type="evidence" value="ECO:0007669"/>
    <property type="project" value="UniProtKB-KW"/>
</dbReference>
<dbReference type="GO" id="GO:0051056">
    <property type="term" value="P:regulation of small GTPase mediated signal transduction"/>
    <property type="evidence" value="ECO:0007669"/>
    <property type="project" value="InterPro"/>
</dbReference>
<dbReference type="FunFam" id="3.40.50.11210:FF:000006">
    <property type="entry name" value="GTPase-activating Rap/Ran-GAP domain-like protein 3 isoform X1"/>
    <property type="match status" value="1"/>
</dbReference>
<dbReference type="Gene3D" id="3.40.50.11210">
    <property type="entry name" value="Rap/Ran-GAP"/>
    <property type="match status" value="1"/>
</dbReference>
<dbReference type="InterPro" id="IPR001180">
    <property type="entry name" value="CNH_dom"/>
</dbReference>
<dbReference type="InterPro" id="IPR035974">
    <property type="entry name" value="Rap/Ran-GAP_sf"/>
</dbReference>
<dbReference type="InterPro" id="IPR000331">
    <property type="entry name" value="Rap/Ran_GAP_dom"/>
</dbReference>
<dbReference type="InterPro" id="IPR050989">
    <property type="entry name" value="Rap1_Ran_GAP"/>
</dbReference>
<dbReference type="PANTHER" id="PTHR15711:SF62">
    <property type="entry name" value="GTPASE-ACTIVATING RAP_RAN-GAP DOMAIN-LIKE PROTEIN 3"/>
    <property type="match status" value="1"/>
</dbReference>
<dbReference type="PANTHER" id="PTHR15711">
    <property type="entry name" value="RAP GTPASE-ACTIVATING PROTEIN"/>
    <property type="match status" value="1"/>
</dbReference>
<dbReference type="Pfam" id="PF00780">
    <property type="entry name" value="CNH"/>
    <property type="match status" value="1"/>
</dbReference>
<dbReference type="Pfam" id="PF02145">
    <property type="entry name" value="Rap_GAP"/>
    <property type="match status" value="1"/>
</dbReference>
<dbReference type="SUPFAM" id="SSF111347">
    <property type="entry name" value="Rap/Ran-GAP"/>
    <property type="match status" value="1"/>
</dbReference>
<dbReference type="PROSITE" id="PS50219">
    <property type="entry name" value="CNH"/>
    <property type="match status" value="1"/>
</dbReference>
<dbReference type="PROSITE" id="PS50085">
    <property type="entry name" value="RAPGAP"/>
    <property type="match status" value="1"/>
</dbReference>
<organism>
    <name type="scientific">Mus musculus</name>
    <name type="common">Mouse</name>
    <dbReference type="NCBI Taxonomy" id="10090"/>
    <lineage>
        <taxon>Eukaryota</taxon>
        <taxon>Metazoa</taxon>
        <taxon>Chordata</taxon>
        <taxon>Craniata</taxon>
        <taxon>Vertebrata</taxon>
        <taxon>Euteleostomi</taxon>
        <taxon>Mammalia</taxon>
        <taxon>Eutheria</taxon>
        <taxon>Euarchontoglires</taxon>
        <taxon>Glires</taxon>
        <taxon>Rodentia</taxon>
        <taxon>Myomorpha</taxon>
        <taxon>Muroidea</taxon>
        <taxon>Muridae</taxon>
        <taxon>Murinae</taxon>
        <taxon>Mus</taxon>
        <taxon>Mus</taxon>
    </lineage>
</organism>
<comment type="alternative products">
    <event type="alternative splicing"/>
    <isoform>
        <id>Q3V0G7-1</id>
        <name>1</name>
        <sequence type="displayed"/>
    </isoform>
    <isoform>
        <id>Q3V0G7-2</id>
        <name>2</name>
        <sequence type="described" ref="VSP_029746 VSP_029747"/>
    </isoform>
</comment>
<comment type="similarity">
    <text evidence="6">Belongs to the GARNL3 family.</text>
</comment>
<comment type="sequence caution" evidence="6">
    <conflict type="erroneous initiation">
        <sequence resource="EMBL-CDS" id="BAC38990"/>
    </conflict>
</comment>
<sequence>MDPLTKGSCGSQLAQTLLWKAKSSLSFGIQPLQTWPTKDPELESQVNLSVSEDLGCRRGDFSRKHYGSVELLISSDADGAIQRAGRFRVENGSTDESAAALPGTWRRTDVHLENPEYHTRWYFKYFLGQVHQNYIGNDAEKSPFFLSVTLSDQNNQRVPQYRAILWRKTGTQKICLPYSPTKTLSVKSILSAMNLDKFEKGPREIFHPEIQKDLLVLEEQEGSVNFKFGVLFAKDGQLTDDEMFSNEIGSEAFQKFLNLLGDTITLKGWTGYRGGLDTKNNTTGINSVYTVYQGHEVMFHVSTMLPYSKENRQQVERKRHIGNDIVTIVFQEGEESSPAFKPSMIRSHFTHIFALVRYDQQNDNYRLKIFSEESVPLFGPPLPSPPVFTDHQEFRDFLLVKLINGEKATLETPTFAQKRRRTLDMLIRSLYQDLMPDLHKNMLNRRSFSDVLPESPKSARKKEEARQAEFVRIGQALKLKSIVRGDAPSSLAASGMCKKEPWEPQCFCCNFPHEAVCADPWGQALLVSTDAGVLLVDDDLPSVPVFDRTLPVKQIHVLETLDLLVLRADKGKDARLFVFRLSAVQKGLDGRQTGRSRSDCRENKLEKTKGCHLYAINTHHSRELRIVVAIRNKLLLITRKPHNKPSGVPGVSLLSPLSESPVEEFQYIREICLCDSPAVMALVDGPTEESDNLICVAYRHQFDVVNESTGEAFRLHHVEANKVNFVAAIDVYEDGEAGLLLCYNYSCIYKKVCPFNGGSFLLQPSASDFQFCWNQAPYAIVCAFPYLLAFTTDSMEIRLVVNGNLVHTAVVPQLQLVASRSDIYFTAATTVHEGSSGGSSKGASAHTSPQTPPARDTPLFPSSLGEGEIQSKNLYKIPLRNLVGRSIERPLKSPLVSKVITPPTSIGLGVAAIPVTHSLSLSRMEIKEIASRTRRELLGLSDDGGTKTEGAPRAKSKTRKRLEESQGGPKPETVRSASSDRIPSGILESPASEANPEGHNHWASSEQDAGVDKEGSPGSGSSPFQLMASSEEDIIDLK</sequence>
<reference key="1">
    <citation type="journal article" date="2005" name="Science">
        <title>The transcriptional landscape of the mammalian genome.</title>
        <authorList>
            <person name="Carninci P."/>
            <person name="Kasukawa T."/>
            <person name="Katayama S."/>
            <person name="Gough J."/>
            <person name="Frith M.C."/>
            <person name="Maeda N."/>
            <person name="Oyama R."/>
            <person name="Ravasi T."/>
            <person name="Lenhard B."/>
            <person name="Wells C."/>
            <person name="Kodzius R."/>
            <person name="Shimokawa K."/>
            <person name="Bajic V.B."/>
            <person name="Brenner S.E."/>
            <person name="Batalov S."/>
            <person name="Forrest A.R."/>
            <person name="Zavolan M."/>
            <person name="Davis M.J."/>
            <person name="Wilming L.G."/>
            <person name="Aidinis V."/>
            <person name="Allen J.E."/>
            <person name="Ambesi-Impiombato A."/>
            <person name="Apweiler R."/>
            <person name="Aturaliya R.N."/>
            <person name="Bailey T.L."/>
            <person name="Bansal M."/>
            <person name="Baxter L."/>
            <person name="Beisel K.W."/>
            <person name="Bersano T."/>
            <person name="Bono H."/>
            <person name="Chalk A.M."/>
            <person name="Chiu K.P."/>
            <person name="Choudhary V."/>
            <person name="Christoffels A."/>
            <person name="Clutterbuck D.R."/>
            <person name="Crowe M.L."/>
            <person name="Dalla E."/>
            <person name="Dalrymple B.P."/>
            <person name="de Bono B."/>
            <person name="Della Gatta G."/>
            <person name="di Bernardo D."/>
            <person name="Down T."/>
            <person name="Engstrom P."/>
            <person name="Fagiolini M."/>
            <person name="Faulkner G."/>
            <person name="Fletcher C.F."/>
            <person name="Fukushima T."/>
            <person name="Furuno M."/>
            <person name="Futaki S."/>
            <person name="Gariboldi M."/>
            <person name="Georgii-Hemming P."/>
            <person name="Gingeras T.R."/>
            <person name="Gojobori T."/>
            <person name="Green R.E."/>
            <person name="Gustincich S."/>
            <person name="Harbers M."/>
            <person name="Hayashi Y."/>
            <person name="Hensch T.K."/>
            <person name="Hirokawa N."/>
            <person name="Hill D."/>
            <person name="Huminiecki L."/>
            <person name="Iacono M."/>
            <person name="Ikeo K."/>
            <person name="Iwama A."/>
            <person name="Ishikawa T."/>
            <person name="Jakt M."/>
            <person name="Kanapin A."/>
            <person name="Katoh M."/>
            <person name="Kawasawa Y."/>
            <person name="Kelso J."/>
            <person name="Kitamura H."/>
            <person name="Kitano H."/>
            <person name="Kollias G."/>
            <person name="Krishnan S.P."/>
            <person name="Kruger A."/>
            <person name="Kummerfeld S.K."/>
            <person name="Kurochkin I.V."/>
            <person name="Lareau L.F."/>
            <person name="Lazarevic D."/>
            <person name="Lipovich L."/>
            <person name="Liu J."/>
            <person name="Liuni S."/>
            <person name="McWilliam S."/>
            <person name="Madan Babu M."/>
            <person name="Madera M."/>
            <person name="Marchionni L."/>
            <person name="Matsuda H."/>
            <person name="Matsuzawa S."/>
            <person name="Miki H."/>
            <person name="Mignone F."/>
            <person name="Miyake S."/>
            <person name="Morris K."/>
            <person name="Mottagui-Tabar S."/>
            <person name="Mulder N."/>
            <person name="Nakano N."/>
            <person name="Nakauchi H."/>
            <person name="Ng P."/>
            <person name="Nilsson R."/>
            <person name="Nishiguchi S."/>
            <person name="Nishikawa S."/>
            <person name="Nori F."/>
            <person name="Ohara O."/>
            <person name="Okazaki Y."/>
            <person name="Orlando V."/>
            <person name="Pang K.C."/>
            <person name="Pavan W.J."/>
            <person name="Pavesi G."/>
            <person name="Pesole G."/>
            <person name="Petrovsky N."/>
            <person name="Piazza S."/>
            <person name="Reed J."/>
            <person name="Reid J.F."/>
            <person name="Ring B.Z."/>
            <person name="Ringwald M."/>
            <person name="Rost B."/>
            <person name="Ruan Y."/>
            <person name="Salzberg S.L."/>
            <person name="Sandelin A."/>
            <person name="Schneider C."/>
            <person name="Schoenbach C."/>
            <person name="Sekiguchi K."/>
            <person name="Semple C.A."/>
            <person name="Seno S."/>
            <person name="Sessa L."/>
            <person name="Sheng Y."/>
            <person name="Shibata Y."/>
            <person name="Shimada H."/>
            <person name="Shimada K."/>
            <person name="Silva D."/>
            <person name="Sinclair B."/>
            <person name="Sperling S."/>
            <person name="Stupka E."/>
            <person name="Sugiura K."/>
            <person name="Sultana R."/>
            <person name="Takenaka Y."/>
            <person name="Taki K."/>
            <person name="Tammoja K."/>
            <person name="Tan S.L."/>
            <person name="Tang S."/>
            <person name="Taylor M.S."/>
            <person name="Tegner J."/>
            <person name="Teichmann S.A."/>
            <person name="Ueda H.R."/>
            <person name="van Nimwegen E."/>
            <person name="Verardo R."/>
            <person name="Wei C.L."/>
            <person name="Yagi K."/>
            <person name="Yamanishi H."/>
            <person name="Zabarovsky E."/>
            <person name="Zhu S."/>
            <person name="Zimmer A."/>
            <person name="Hide W."/>
            <person name="Bult C."/>
            <person name="Grimmond S.M."/>
            <person name="Teasdale R.D."/>
            <person name="Liu E.T."/>
            <person name="Brusic V."/>
            <person name="Quackenbush J."/>
            <person name="Wahlestedt C."/>
            <person name="Mattick J.S."/>
            <person name="Hume D.A."/>
            <person name="Kai C."/>
            <person name="Sasaki D."/>
            <person name="Tomaru Y."/>
            <person name="Fukuda S."/>
            <person name="Kanamori-Katayama M."/>
            <person name="Suzuki M."/>
            <person name="Aoki J."/>
            <person name="Arakawa T."/>
            <person name="Iida J."/>
            <person name="Imamura K."/>
            <person name="Itoh M."/>
            <person name="Kato T."/>
            <person name="Kawaji H."/>
            <person name="Kawagashira N."/>
            <person name="Kawashima T."/>
            <person name="Kojima M."/>
            <person name="Kondo S."/>
            <person name="Konno H."/>
            <person name="Nakano K."/>
            <person name="Ninomiya N."/>
            <person name="Nishio T."/>
            <person name="Okada M."/>
            <person name="Plessy C."/>
            <person name="Shibata K."/>
            <person name="Shiraki T."/>
            <person name="Suzuki S."/>
            <person name="Tagami M."/>
            <person name="Waki K."/>
            <person name="Watahiki A."/>
            <person name="Okamura-Oho Y."/>
            <person name="Suzuki H."/>
            <person name="Kawai J."/>
            <person name="Hayashizaki Y."/>
        </authorList>
    </citation>
    <scope>NUCLEOTIDE SEQUENCE [LARGE SCALE MRNA] (ISOFORMS 1 AND 2)</scope>
    <source>
        <strain>C57BL/6J</strain>
        <tissue>Diencephalon</tissue>
        <tissue>Testis</tissue>
    </source>
</reference>
<reference key="2">
    <citation type="journal article" date="2009" name="PLoS Biol.">
        <title>Lineage-specific biology revealed by a finished genome assembly of the mouse.</title>
        <authorList>
            <person name="Church D.M."/>
            <person name="Goodstadt L."/>
            <person name="Hillier L.W."/>
            <person name="Zody M.C."/>
            <person name="Goldstein S."/>
            <person name="She X."/>
            <person name="Bult C.J."/>
            <person name="Agarwala R."/>
            <person name="Cherry J.L."/>
            <person name="DiCuccio M."/>
            <person name="Hlavina W."/>
            <person name="Kapustin Y."/>
            <person name="Meric P."/>
            <person name="Maglott D."/>
            <person name="Birtle Z."/>
            <person name="Marques A.C."/>
            <person name="Graves T."/>
            <person name="Zhou S."/>
            <person name="Teague B."/>
            <person name="Potamousis K."/>
            <person name="Churas C."/>
            <person name="Place M."/>
            <person name="Herschleb J."/>
            <person name="Runnheim R."/>
            <person name="Forrest D."/>
            <person name="Amos-Landgraf J."/>
            <person name="Schwartz D.C."/>
            <person name="Cheng Z."/>
            <person name="Lindblad-Toh K."/>
            <person name="Eichler E.E."/>
            <person name="Ponting C.P."/>
        </authorList>
    </citation>
    <scope>NUCLEOTIDE SEQUENCE [LARGE SCALE GENOMIC DNA]</scope>
    <source>
        <strain>C57BL/6J</strain>
    </source>
</reference>
<reference key="3">
    <citation type="journal article" date="2004" name="Genome Res.">
        <title>The status, quality, and expansion of the NIH full-length cDNA project: the Mammalian Gene Collection (MGC).</title>
        <authorList>
            <consortium name="The MGC Project Team"/>
        </authorList>
    </citation>
    <scope>NUCLEOTIDE SEQUENCE [LARGE SCALE MRNA] (ISOFORM 2)</scope>
    <source>
        <tissue>Brain</tissue>
    </source>
</reference>
<reference key="4">
    <citation type="submission" date="2009-01" db="UniProtKB">
        <authorList>
            <person name="Lubec G."/>
            <person name="Sunyer B."/>
            <person name="Chen W.-Q."/>
        </authorList>
    </citation>
    <scope>PROTEIN SEQUENCE OF 188-197</scope>
    <scope>IDENTIFICATION BY MASS SPECTROMETRY</scope>
    <source>
        <strain>OF1</strain>
        <tissue>Hippocampus</tissue>
    </source>
</reference>
<reference key="5">
    <citation type="journal article" date="2010" name="Cell">
        <title>A tissue-specific atlas of mouse protein phosphorylation and expression.</title>
        <authorList>
            <person name="Huttlin E.L."/>
            <person name="Jedrychowski M.P."/>
            <person name="Elias J.E."/>
            <person name="Goswami T."/>
            <person name="Rad R."/>
            <person name="Beausoleil S.A."/>
            <person name="Villen J."/>
            <person name="Haas W."/>
            <person name="Sowa M.E."/>
            <person name="Gygi S.P."/>
        </authorList>
    </citation>
    <scope>PHOSPHORYLATION [LARGE SCALE ANALYSIS] AT SER-68; SER-449; SER-455 AND THR-851</scope>
    <scope>PHOSPHORYLATION [LARGE SCALE ANALYSIS] AT SER-6 (ISOFORM 2)</scope>
    <scope>IDENTIFICATION BY MASS SPECTROMETRY [LARGE SCALE ANALYSIS]</scope>
    <source>
        <tissue>Brain</tissue>
        <tissue>Testis</tissue>
    </source>
</reference>
<accession>Q3V0G7</accession>
<accession>Q8BNH8</accession>
<accession>Q8CC22</accession>
<name>GARL3_MOUSE</name>